<name>SRRT_PONAB</name>
<organism>
    <name type="scientific">Pongo abelii</name>
    <name type="common">Sumatran orangutan</name>
    <name type="synonym">Pongo pygmaeus abelii</name>
    <dbReference type="NCBI Taxonomy" id="9601"/>
    <lineage>
        <taxon>Eukaryota</taxon>
        <taxon>Metazoa</taxon>
        <taxon>Chordata</taxon>
        <taxon>Craniata</taxon>
        <taxon>Vertebrata</taxon>
        <taxon>Euteleostomi</taxon>
        <taxon>Mammalia</taxon>
        <taxon>Eutheria</taxon>
        <taxon>Euarchontoglires</taxon>
        <taxon>Primates</taxon>
        <taxon>Haplorrhini</taxon>
        <taxon>Catarrhini</taxon>
        <taxon>Hominidae</taxon>
        <taxon>Pongo</taxon>
    </lineage>
</organism>
<comment type="function">
    <text evidence="1">Acts as a mediator between the cap-binding complex (CBC) and the primary microRNAs (miRNAs) processing machinery during cell proliferation. Contributes to the stability and delivery of capped primary miRNA transcripts to the primary miRNA processing complex containing DGCR8 and DROSHA, thereby playing a role in RNA-mediated gene silencing (RNAi) by miRNAs. Binds capped RNAs (m7GpppG-capped RNA); however interaction is probably mediated via its interaction with NCBP1/CBP80 component of the CBC complex. Involved in cell cycle progression at S phase. Does not directly confer arsenite resistance but rather modulates arsenic sensitivity. Independently of its activity on miRNAs, necessary and sufficient to promote neural stem cell self-renewal. Does so by directly binding SOX2 promoter and positively regulating its transcription (By similarity).</text>
</comment>
<comment type="subunit">
    <text evidence="2 3">Interacts with CASP8AP2, ERBB4, NCBP1/CBP80 and DROSHA. Interacts with LUZP4. Interacts with NCBP2/CBP20 and NCBP3. Interacts with MTREX (By similarity).</text>
</comment>
<comment type="subcellular location">
    <subcellularLocation>
        <location evidence="1">Nucleus</location>
        <location evidence="1">Nucleoplasm</location>
    </subcellularLocation>
    <subcellularLocation>
        <location evidence="1">Cytoplasm</location>
    </subcellularLocation>
    <text evidence="1">Predominantly nuclear. Shuttles between the nucleus and the cytoplasm in a CRM1-dependent way (By similarity).</text>
</comment>
<comment type="similarity">
    <text evidence="5">Belongs to the ARS2 family.</text>
</comment>
<proteinExistence type="evidence at transcript level"/>
<protein>
    <recommendedName>
        <fullName>Serrate RNA effector molecule homolog</fullName>
    </recommendedName>
    <alternativeName>
        <fullName>Arsenite-resistance protein 2</fullName>
    </alternativeName>
</protein>
<keyword id="KW-0007">Acetylation</keyword>
<keyword id="KW-0010">Activator</keyword>
<keyword id="KW-0963">Cytoplasm</keyword>
<keyword id="KW-1017">Isopeptide bond</keyword>
<keyword id="KW-0488">Methylation</keyword>
<keyword id="KW-0539">Nucleus</keyword>
<keyword id="KW-0597">Phosphoprotein</keyword>
<keyword id="KW-1185">Reference proteome</keyword>
<keyword id="KW-0943">RNA-mediated gene silencing</keyword>
<keyword id="KW-0804">Transcription</keyword>
<keyword id="KW-0805">Transcription regulation</keyword>
<keyword id="KW-0832">Ubl conjugation</keyword>
<gene>
    <name type="primary">SRRT</name>
    <name type="synonym">ARS2</name>
</gene>
<evidence type="ECO:0000250" key="1"/>
<evidence type="ECO:0000250" key="2">
    <source>
        <dbReference type="UniProtKB" id="Q99MR6"/>
    </source>
</evidence>
<evidence type="ECO:0000250" key="3">
    <source>
        <dbReference type="UniProtKB" id="Q9BXP5"/>
    </source>
</evidence>
<evidence type="ECO:0000256" key="4">
    <source>
        <dbReference type="SAM" id="MobiDB-lite"/>
    </source>
</evidence>
<evidence type="ECO:0000305" key="5"/>
<dbReference type="EMBL" id="CR861036">
    <property type="protein sequence ID" value="CAH93127.1"/>
    <property type="molecule type" value="mRNA"/>
</dbReference>
<dbReference type="RefSeq" id="NP_001126849.1">
    <property type="nucleotide sequence ID" value="NM_001133377.1"/>
</dbReference>
<dbReference type="SMR" id="Q5R539"/>
<dbReference type="FunCoup" id="Q5R539">
    <property type="interactions" value="3829"/>
</dbReference>
<dbReference type="STRING" id="9601.ENSPPYP00000019542"/>
<dbReference type="GeneID" id="100173857"/>
<dbReference type="KEGG" id="pon:100173857"/>
<dbReference type="CTD" id="51593"/>
<dbReference type="InParanoid" id="Q5R539"/>
<dbReference type="OrthoDB" id="342064at2759"/>
<dbReference type="Proteomes" id="UP000001595">
    <property type="component" value="Unplaced"/>
</dbReference>
<dbReference type="GO" id="GO:0005737">
    <property type="term" value="C:cytoplasm"/>
    <property type="evidence" value="ECO:0000250"/>
    <property type="project" value="UniProtKB"/>
</dbReference>
<dbReference type="GO" id="GO:0016604">
    <property type="term" value="C:nuclear body"/>
    <property type="evidence" value="ECO:0007669"/>
    <property type="project" value="TreeGrafter"/>
</dbReference>
<dbReference type="GO" id="GO:0005654">
    <property type="term" value="C:nucleoplasm"/>
    <property type="evidence" value="ECO:0000250"/>
    <property type="project" value="UniProtKB"/>
</dbReference>
<dbReference type="GO" id="GO:0003677">
    <property type="term" value="F:DNA binding"/>
    <property type="evidence" value="ECO:0000250"/>
    <property type="project" value="UniProtKB"/>
</dbReference>
<dbReference type="GO" id="GO:0097150">
    <property type="term" value="P:neuronal stem cell population maintenance"/>
    <property type="evidence" value="ECO:0000250"/>
    <property type="project" value="UniProtKB"/>
</dbReference>
<dbReference type="GO" id="GO:0031053">
    <property type="term" value="P:primary miRNA processing"/>
    <property type="evidence" value="ECO:0000250"/>
    <property type="project" value="UniProtKB"/>
</dbReference>
<dbReference type="GO" id="GO:0006355">
    <property type="term" value="P:regulation of DNA-templated transcription"/>
    <property type="evidence" value="ECO:0000250"/>
    <property type="project" value="UniProtKB"/>
</dbReference>
<dbReference type="FunFam" id="3.30.70.330:FF:000593">
    <property type="entry name" value="Serrate RNA effector molecule homolog"/>
    <property type="match status" value="1"/>
</dbReference>
<dbReference type="InterPro" id="IPR035979">
    <property type="entry name" value="RBD_domain_sf"/>
</dbReference>
<dbReference type="InterPro" id="IPR039727">
    <property type="entry name" value="SE/Ars2"/>
</dbReference>
<dbReference type="InterPro" id="IPR007042">
    <property type="entry name" value="SERRATE/Ars2_C"/>
</dbReference>
<dbReference type="InterPro" id="IPR021933">
    <property type="entry name" value="SERRATE/Ars2_N"/>
</dbReference>
<dbReference type="PANTHER" id="PTHR13165">
    <property type="entry name" value="ARSENITE-RESISTANCE PROTEIN 2"/>
    <property type="match status" value="1"/>
</dbReference>
<dbReference type="PANTHER" id="PTHR13165:SF0">
    <property type="entry name" value="SERRATE RNA EFFECTOR MOLECULE HOMOLOG"/>
    <property type="match status" value="1"/>
</dbReference>
<dbReference type="Pfam" id="PF04959">
    <property type="entry name" value="ARS2"/>
    <property type="match status" value="1"/>
</dbReference>
<dbReference type="Pfam" id="PF12066">
    <property type="entry name" value="SERRATE_Ars2_N"/>
    <property type="match status" value="1"/>
</dbReference>
<dbReference type="SUPFAM" id="SSF54928">
    <property type="entry name" value="RNA-binding domain, RBD"/>
    <property type="match status" value="1"/>
</dbReference>
<feature type="initiator methionine" description="Removed" evidence="3">
    <location>
        <position position="1"/>
    </location>
</feature>
<feature type="chain" id="PRO_0000325960" description="Serrate RNA effector molecule homolog">
    <location>
        <begin position="2"/>
        <end position="871"/>
    </location>
</feature>
<feature type="region of interest" description="Disordered" evidence="4">
    <location>
        <begin position="1"/>
        <end position="90"/>
    </location>
</feature>
<feature type="region of interest" description="Disordered" evidence="4">
    <location>
        <begin position="272"/>
        <end position="411"/>
    </location>
</feature>
<feature type="region of interest" description="Disordered" evidence="4">
    <location>
        <begin position="574"/>
        <end position="597"/>
    </location>
</feature>
<feature type="region of interest" description="Disordered" evidence="4">
    <location>
        <begin position="830"/>
        <end position="849"/>
    </location>
</feature>
<feature type="compositionally biased region" description="Basic and acidic residues" evidence="4">
    <location>
        <begin position="8"/>
        <end position="73"/>
    </location>
</feature>
<feature type="compositionally biased region" description="Basic and acidic residues" evidence="4">
    <location>
        <begin position="297"/>
        <end position="347"/>
    </location>
</feature>
<feature type="compositionally biased region" description="Acidic residues" evidence="4">
    <location>
        <begin position="370"/>
        <end position="385"/>
    </location>
</feature>
<feature type="compositionally biased region" description="Basic and acidic residues" evidence="4">
    <location>
        <begin position="386"/>
        <end position="411"/>
    </location>
</feature>
<feature type="modified residue" description="N-acetylglycine" evidence="3">
    <location>
        <position position="2"/>
    </location>
</feature>
<feature type="modified residue" description="Phosphoserine" evidence="3">
    <location>
        <position position="4"/>
    </location>
</feature>
<feature type="modified residue" description="Phosphotyrosine" evidence="3">
    <location>
        <position position="8"/>
    </location>
</feature>
<feature type="modified residue" description="Phosphoserine" evidence="3">
    <location>
        <position position="67"/>
    </location>
</feature>
<feature type="modified residue" description="Phosphoserine" evidence="3">
    <location>
        <position position="74"/>
    </location>
</feature>
<feature type="modified residue" description="Phosphoserine" evidence="3">
    <location>
        <position position="136"/>
    </location>
</feature>
<feature type="modified residue" description="Phosphoserine" evidence="3">
    <location>
        <position position="492"/>
    </location>
</feature>
<feature type="modified residue" description="Phosphoserine" evidence="3">
    <location>
        <position position="539"/>
    </location>
</feature>
<feature type="modified residue" description="Phosphothreonine" evidence="3">
    <location>
        <position position="543"/>
    </location>
</feature>
<feature type="modified residue" description="Phosphoserine" evidence="3">
    <location>
        <position position="569"/>
    </location>
</feature>
<feature type="modified residue" description="Phosphothreonine" evidence="3">
    <location>
        <position position="670"/>
    </location>
</feature>
<feature type="modified residue" description="Phosphoserine" evidence="3">
    <location>
        <position position="678"/>
    </location>
</feature>
<feature type="modified residue" description="Omega-N-methylarginine" evidence="3">
    <location>
        <position position="828"/>
    </location>
</feature>
<feature type="modified residue" description="Omega-N-methylarginine" evidence="3">
    <location>
        <position position="835"/>
    </location>
</feature>
<feature type="modified residue" description="Omega-N-methylarginine" evidence="3">
    <location>
        <position position="845"/>
    </location>
</feature>
<feature type="cross-link" description="Glycyl lysine isopeptide (Lys-Gly) (interchain with G-Cter in SUMO2)" evidence="3">
    <location>
        <position position="150"/>
    </location>
</feature>
<accession>Q5R539</accession>
<reference key="1">
    <citation type="submission" date="2004-11" db="EMBL/GenBank/DDBJ databases">
        <authorList>
            <consortium name="The German cDNA consortium"/>
        </authorList>
    </citation>
    <scope>NUCLEOTIDE SEQUENCE [LARGE SCALE MRNA]</scope>
    <source>
        <tissue>Liver</tissue>
    </source>
</reference>
<sequence>MGDSDDEYDRRRRDKFRRERSDYDRSRERDERRRGDDWNDREWDHGRERRSRGEYRDYDRNRRERFSPPRHELSPPQKRMRRDWDGHSSDPYHSGYEMPYAGGGGGPTYGPPQPWGHPGVHIMQHHVLPIQARLGSIAEIDLGVPPPVMKTFKEFLLSLDDSVDETEAVKRYNDYKLDFRRQQMQDFFLAHKDEEWFRSKYHPDEVGKRRQEARGALQNRLRVFLSLMETGWFDNLLLDIDKADAIVKMLDAAVIKMEGGTENDLRILEQEEEEEQAGKPGEPGKKEEGRAGAGLGDGERKTNDKDEKKEDSKQAENDSSNDDKTKKSEGDGDKEEKKEDSEKEAKKSSKKRNRKHSGDDSFDEGSMSESESESESGQAEEEKEEAEALKEKEKPKEEEWEKPKDAAGLECKPRPLHKTCSLFMRNIAPNISRAEIISLCKRYPGFMRVALSEPQPERRFFRRGWVTFDRSVNIKEICWNLQNIRLRECELSPGVNRDLTRRVRNINGITQHKQIVRNDIKLAAKLIHTLDDRTQLWASEPGTPPLPTSLPSQNPILKNITDYLIEEVSAEEEELLGSSGGAPPEEPPKEGNPAEINVERDEKLIKVLDKLLLYLRIVHSLDYYNTCEYPNEDEMPNRCGIIHVRGPMPPNRISHGEVLEWQKTFEEKLTPLLSVRESLSEEEAQKMGRKDPEQEVEKFVTSNTQELGKDKWLCPLSGKKFKGPEFVRKHIFNKHAEKIEEVKKEVAFFNNFLTDAKRPALPEIKPAQPPGPAQSLTPGLPYPHQTPQGLMPYGQPRPPILGYGAGAVRPAVPTGGPPYPHAPYGAGRGNYDAFRGQGGYPGKPRNRMVRGDPRAIVEYRDLDAPDDVDFF</sequence>